<dbReference type="EC" id="3.4.21.92" evidence="1"/>
<dbReference type="EMBL" id="AM286690">
    <property type="protein sequence ID" value="CAL16658.1"/>
    <property type="status" value="ALT_INIT"/>
    <property type="molecule type" value="Genomic_DNA"/>
</dbReference>
<dbReference type="SMR" id="Q0VQ90"/>
<dbReference type="STRING" id="393595.ABO_1210"/>
<dbReference type="MEROPS" id="S14.001"/>
<dbReference type="KEGG" id="abo:ABO_1210"/>
<dbReference type="eggNOG" id="COG0740">
    <property type="taxonomic scope" value="Bacteria"/>
</dbReference>
<dbReference type="HOGENOM" id="CLU_058707_3_2_6"/>
<dbReference type="OrthoDB" id="9802800at2"/>
<dbReference type="Proteomes" id="UP000008871">
    <property type="component" value="Chromosome"/>
</dbReference>
<dbReference type="GO" id="GO:0005737">
    <property type="term" value="C:cytoplasm"/>
    <property type="evidence" value="ECO:0007669"/>
    <property type="project" value="UniProtKB-SubCell"/>
</dbReference>
<dbReference type="GO" id="GO:0009368">
    <property type="term" value="C:endopeptidase Clp complex"/>
    <property type="evidence" value="ECO:0007669"/>
    <property type="project" value="TreeGrafter"/>
</dbReference>
<dbReference type="GO" id="GO:0004176">
    <property type="term" value="F:ATP-dependent peptidase activity"/>
    <property type="evidence" value="ECO:0007669"/>
    <property type="project" value="InterPro"/>
</dbReference>
<dbReference type="GO" id="GO:0051117">
    <property type="term" value="F:ATPase binding"/>
    <property type="evidence" value="ECO:0007669"/>
    <property type="project" value="TreeGrafter"/>
</dbReference>
<dbReference type="GO" id="GO:0004252">
    <property type="term" value="F:serine-type endopeptidase activity"/>
    <property type="evidence" value="ECO:0007669"/>
    <property type="project" value="UniProtKB-UniRule"/>
</dbReference>
<dbReference type="GO" id="GO:0006515">
    <property type="term" value="P:protein quality control for misfolded or incompletely synthesized proteins"/>
    <property type="evidence" value="ECO:0007669"/>
    <property type="project" value="TreeGrafter"/>
</dbReference>
<dbReference type="CDD" id="cd07017">
    <property type="entry name" value="S14_ClpP_2"/>
    <property type="match status" value="1"/>
</dbReference>
<dbReference type="FunFam" id="3.90.226.10:FF:000001">
    <property type="entry name" value="ATP-dependent Clp protease proteolytic subunit"/>
    <property type="match status" value="1"/>
</dbReference>
<dbReference type="Gene3D" id="3.90.226.10">
    <property type="entry name" value="2-enoyl-CoA Hydratase, Chain A, domain 1"/>
    <property type="match status" value="1"/>
</dbReference>
<dbReference type="HAMAP" id="MF_00444">
    <property type="entry name" value="ClpP"/>
    <property type="match status" value="1"/>
</dbReference>
<dbReference type="InterPro" id="IPR001907">
    <property type="entry name" value="ClpP"/>
</dbReference>
<dbReference type="InterPro" id="IPR029045">
    <property type="entry name" value="ClpP/crotonase-like_dom_sf"/>
</dbReference>
<dbReference type="InterPro" id="IPR023562">
    <property type="entry name" value="ClpP/TepA"/>
</dbReference>
<dbReference type="InterPro" id="IPR033135">
    <property type="entry name" value="ClpP_His_AS"/>
</dbReference>
<dbReference type="InterPro" id="IPR018215">
    <property type="entry name" value="ClpP_Ser_AS"/>
</dbReference>
<dbReference type="NCBIfam" id="TIGR00493">
    <property type="entry name" value="clpP"/>
    <property type="match status" value="1"/>
</dbReference>
<dbReference type="NCBIfam" id="NF001368">
    <property type="entry name" value="PRK00277.1"/>
    <property type="match status" value="1"/>
</dbReference>
<dbReference type="NCBIfam" id="NF009205">
    <property type="entry name" value="PRK12553.1"/>
    <property type="match status" value="1"/>
</dbReference>
<dbReference type="PANTHER" id="PTHR10381">
    <property type="entry name" value="ATP-DEPENDENT CLP PROTEASE PROTEOLYTIC SUBUNIT"/>
    <property type="match status" value="1"/>
</dbReference>
<dbReference type="PANTHER" id="PTHR10381:SF70">
    <property type="entry name" value="ATP-DEPENDENT CLP PROTEASE PROTEOLYTIC SUBUNIT"/>
    <property type="match status" value="1"/>
</dbReference>
<dbReference type="Pfam" id="PF00574">
    <property type="entry name" value="CLP_protease"/>
    <property type="match status" value="1"/>
</dbReference>
<dbReference type="PRINTS" id="PR00127">
    <property type="entry name" value="CLPPROTEASEP"/>
</dbReference>
<dbReference type="SUPFAM" id="SSF52096">
    <property type="entry name" value="ClpP/crotonase"/>
    <property type="match status" value="1"/>
</dbReference>
<dbReference type="PROSITE" id="PS00382">
    <property type="entry name" value="CLP_PROTEASE_HIS"/>
    <property type="match status" value="1"/>
</dbReference>
<dbReference type="PROSITE" id="PS00381">
    <property type="entry name" value="CLP_PROTEASE_SER"/>
    <property type="match status" value="1"/>
</dbReference>
<comment type="function">
    <text evidence="1">Cleaves peptides in various proteins in a process that requires ATP hydrolysis. Has a chymotrypsin-like activity. Plays a major role in the degradation of misfolded proteins.</text>
</comment>
<comment type="catalytic activity">
    <reaction evidence="1">
        <text>Hydrolysis of proteins to small peptides in the presence of ATP and magnesium. alpha-casein is the usual test substrate. In the absence of ATP, only oligopeptides shorter than five residues are hydrolyzed (such as succinyl-Leu-Tyr-|-NHMec, and Leu-Tyr-Leu-|-Tyr-Trp, in which cleavage of the -Tyr-|-Leu- and -Tyr-|-Trp bonds also occurs).</text>
        <dbReference type="EC" id="3.4.21.92"/>
    </reaction>
</comment>
<comment type="subunit">
    <text evidence="1">Fourteen ClpP subunits assemble into 2 heptameric rings which stack back to back to give a disk-like structure with a central cavity, resembling the structure of eukaryotic proteasomes.</text>
</comment>
<comment type="subcellular location">
    <subcellularLocation>
        <location evidence="1">Cytoplasm</location>
    </subcellularLocation>
</comment>
<comment type="similarity">
    <text evidence="1">Belongs to the peptidase S14 family.</text>
</comment>
<comment type="sequence caution" evidence="2">
    <conflict type="erroneous initiation">
        <sequence resource="EMBL-CDS" id="CAL16658"/>
    </conflict>
</comment>
<evidence type="ECO:0000255" key="1">
    <source>
        <dbReference type="HAMAP-Rule" id="MF_00444"/>
    </source>
</evidence>
<evidence type="ECO:0000305" key="2"/>
<proteinExistence type="inferred from homology"/>
<reference key="1">
    <citation type="journal article" date="2006" name="Nat. Biotechnol.">
        <title>Genome sequence of the ubiquitous hydrocarbon-degrading marine bacterium Alcanivorax borkumensis.</title>
        <authorList>
            <person name="Schneiker S."/>
            <person name="Martins dos Santos V.A.P."/>
            <person name="Bartels D."/>
            <person name="Bekel T."/>
            <person name="Brecht M."/>
            <person name="Buhrmester J."/>
            <person name="Chernikova T.N."/>
            <person name="Denaro R."/>
            <person name="Ferrer M."/>
            <person name="Gertler C."/>
            <person name="Goesmann A."/>
            <person name="Golyshina O.V."/>
            <person name="Kaminski F."/>
            <person name="Khachane A.N."/>
            <person name="Lang S."/>
            <person name="Linke B."/>
            <person name="McHardy A.C."/>
            <person name="Meyer F."/>
            <person name="Nechitaylo T."/>
            <person name="Puehler A."/>
            <person name="Regenhardt D."/>
            <person name="Rupp O."/>
            <person name="Sabirova J.S."/>
            <person name="Selbitschka W."/>
            <person name="Yakimov M.M."/>
            <person name="Timmis K.N."/>
            <person name="Vorhoelter F.-J."/>
            <person name="Weidner S."/>
            <person name="Kaiser O."/>
            <person name="Golyshin P.N."/>
        </authorList>
    </citation>
    <scope>NUCLEOTIDE SEQUENCE [LARGE SCALE GENOMIC DNA]</scope>
    <source>
        <strain>ATCC 700651 / DSM 11573 / NCIMB 13689 / SK2</strain>
    </source>
</reference>
<sequence length="205" mass="22525">MSQLIKDPTNLGLVPVVIEQTARGERSFDIYSRLLKERVIFMIGQVEDHMANLIVAQMLFLESENPDKDIHLYINSPGGSVTAGMSIYDTMQFIKPDVSTMCIGQAASMGAFLLTAGAAGKRFALPNARVMIHQPLGGFQGQASDIEIHAKEILKIKGQLNSLLAHHTGQPIEQLEKDTDRDNFMSADEAKEYGIIDAVLSQRPV</sequence>
<feature type="chain" id="PRO_0000252805" description="ATP-dependent Clp protease proteolytic subunit">
    <location>
        <begin position="1"/>
        <end position="205"/>
    </location>
</feature>
<feature type="active site" description="Nucleophile" evidence="1">
    <location>
        <position position="108"/>
    </location>
</feature>
<feature type="active site" evidence="1">
    <location>
        <position position="133"/>
    </location>
</feature>
<protein>
    <recommendedName>
        <fullName evidence="1">ATP-dependent Clp protease proteolytic subunit</fullName>
        <ecNumber evidence="1">3.4.21.92</ecNumber>
    </recommendedName>
    <alternativeName>
        <fullName evidence="1">Endopeptidase Clp</fullName>
    </alternativeName>
</protein>
<keyword id="KW-0963">Cytoplasm</keyword>
<keyword id="KW-0378">Hydrolase</keyword>
<keyword id="KW-0645">Protease</keyword>
<keyword id="KW-1185">Reference proteome</keyword>
<keyword id="KW-0720">Serine protease</keyword>
<gene>
    <name evidence="1" type="primary">clpP</name>
    <name type="ordered locus">ABO_1210</name>
</gene>
<organism>
    <name type="scientific">Alcanivorax borkumensis (strain ATCC 700651 / DSM 11573 / NCIMB 13689 / SK2)</name>
    <dbReference type="NCBI Taxonomy" id="393595"/>
    <lineage>
        <taxon>Bacteria</taxon>
        <taxon>Pseudomonadati</taxon>
        <taxon>Pseudomonadota</taxon>
        <taxon>Gammaproteobacteria</taxon>
        <taxon>Oceanospirillales</taxon>
        <taxon>Alcanivoracaceae</taxon>
        <taxon>Alcanivorax</taxon>
    </lineage>
</organism>
<accession>Q0VQ90</accession>
<name>CLPP_ALCBS</name>